<accession>Q6DBY9</accession>
<accession>Q4QRG8</accession>
<name>CHST1_DANRE</name>
<proteinExistence type="evidence at transcript level"/>
<keyword id="KW-0119">Carbohydrate metabolism</keyword>
<keyword id="KW-0325">Glycoprotein</keyword>
<keyword id="KW-0333">Golgi apparatus</keyword>
<keyword id="KW-0472">Membrane</keyword>
<keyword id="KW-1185">Reference proteome</keyword>
<keyword id="KW-0735">Signal-anchor</keyword>
<keyword id="KW-0808">Transferase</keyword>
<keyword id="KW-0812">Transmembrane</keyword>
<keyword id="KW-1133">Transmembrane helix</keyword>
<reference key="1">
    <citation type="submission" date="2005-06" db="EMBL/GenBank/DDBJ databases">
        <authorList>
            <consortium name="NIH - Zebrafish Gene Collection (ZGC) project"/>
        </authorList>
    </citation>
    <scope>NUCLEOTIDE SEQUENCE [LARGE SCALE MRNA]</scope>
    <source>
        <tissue>Embryo</tissue>
        <tissue>Olfactory epithelium</tissue>
    </source>
</reference>
<gene>
    <name type="primary">chst1</name>
    <name type="ORF">zgc:100904</name>
</gene>
<sequence length="420" mass="48212">MQCSWKAVILLALVSIAIQYTAIRTFTAKPFHICPVPNPLNCGLGQDVESFDRMCDEYPYFNYNSSRKTHILILATTRSGSSFVGQLFNQHSDVFYLFEPLYHVQTTLIPHLSPSRYAVERRVMLGASRDLLRSLYNCDLYFLESYIKPQPANHTTDKLFRRGASKALCSMPVCDAFSPNDGNIEEGDCVRKCASLNLTLATESCRERRHVAIKTVRIPEVNDLKALIEDPRLNLKVIQLVRDPRGILSSRIETFRDTYRLWRIWRATGRKPYNLDLTQLTTVCDDFLNSVSTGLSRPPWLRGRYMLVRYEDLARNPLQKTKEVYEFLGLSLEKGVVDWIHNNTRGNNDVSAKHKYGTLRDSAANAESWRLKLSHDIVDYTQTVCQHILDELGYKAVNSPEELKNMSISLIEDKTFIPFL</sequence>
<protein>
    <recommendedName>
        <fullName>Carbohydrate sulfotransferase 1</fullName>
        <ecNumber>2.8.2.21</ecNumber>
    </recommendedName>
    <alternativeName>
        <fullName>Keratan sulfate Gal-6 sulfotransferase</fullName>
        <shortName>KS6ST</shortName>
        <shortName>KSGal6ST</shortName>
        <shortName>KSST</shortName>
    </alternativeName>
</protein>
<organism>
    <name type="scientific">Danio rerio</name>
    <name type="common">Zebrafish</name>
    <name type="synonym">Brachydanio rerio</name>
    <dbReference type="NCBI Taxonomy" id="7955"/>
    <lineage>
        <taxon>Eukaryota</taxon>
        <taxon>Metazoa</taxon>
        <taxon>Chordata</taxon>
        <taxon>Craniata</taxon>
        <taxon>Vertebrata</taxon>
        <taxon>Euteleostomi</taxon>
        <taxon>Actinopterygii</taxon>
        <taxon>Neopterygii</taxon>
        <taxon>Teleostei</taxon>
        <taxon>Ostariophysi</taxon>
        <taxon>Cypriniformes</taxon>
        <taxon>Danionidae</taxon>
        <taxon>Danioninae</taxon>
        <taxon>Danio</taxon>
    </lineage>
</organism>
<dbReference type="EC" id="2.8.2.21"/>
<dbReference type="EMBL" id="BC078309">
    <property type="protein sequence ID" value="AAH78309.1"/>
    <property type="molecule type" value="mRNA"/>
</dbReference>
<dbReference type="EMBL" id="BC096983">
    <property type="protein sequence ID" value="AAH96983.1"/>
    <property type="molecule type" value="mRNA"/>
</dbReference>
<dbReference type="RefSeq" id="NP_001003518.1">
    <property type="nucleotide sequence ID" value="NM_001003518.2"/>
</dbReference>
<dbReference type="FunCoup" id="Q6DBY9">
    <property type="interactions" value="952"/>
</dbReference>
<dbReference type="STRING" id="7955.ENSDARP00000108405"/>
<dbReference type="GlyCosmos" id="Q6DBY9">
    <property type="glycosylation" value="5 sites, No reported glycans"/>
</dbReference>
<dbReference type="PaxDb" id="7955-ENSDARP00000108405"/>
<dbReference type="GeneID" id="445124"/>
<dbReference type="KEGG" id="dre:445124"/>
<dbReference type="AGR" id="ZFIN:ZDB-GENE-040801-21"/>
<dbReference type="CTD" id="8534"/>
<dbReference type="ZFIN" id="ZDB-GENE-040801-21">
    <property type="gene designation" value="chst1"/>
</dbReference>
<dbReference type="eggNOG" id="ENOG502S17I">
    <property type="taxonomic scope" value="Eukaryota"/>
</dbReference>
<dbReference type="InParanoid" id="Q6DBY9"/>
<dbReference type="OrthoDB" id="6138663at2759"/>
<dbReference type="PhylomeDB" id="Q6DBY9"/>
<dbReference type="Reactome" id="R-DRE-2022854">
    <property type="pathway name" value="Keratan sulfate biosynthesis"/>
</dbReference>
<dbReference type="PRO" id="PR:Q6DBY9"/>
<dbReference type="Proteomes" id="UP000000437">
    <property type="component" value="Alternate scaffold 25"/>
</dbReference>
<dbReference type="Proteomes" id="UP000000437">
    <property type="component" value="Chromosome 25"/>
</dbReference>
<dbReference type="GO" id="GO:0000139">
    <property type="term" value="C:Golgi membrane"/>
    <property type="evidence" value="ECO:0007669"/>
    <property type="project" value="UniProtKB-SubCell"/>
</dbReference>
<dbReference type="GO" id="GO:0045130">
    <property type="term" value="F:keratan sulfotransferase activity"/>
    <property type="evidence" value="ECO:0000318"/>
    <property type="project" value="GO_Central"/>
</dbReference>
<dbReference type="GO" id="GO:0001517">
    <property type="term" value="F:N-acetylglucosamine 6-O-sulfotransferase activity"/>
    <property type="evidence" value="ECO:0000318"/>
    <property type="project" value="GO_Central"/>
</dbReference>
<dbReference type="GO" id="GO:0005975">
    <property type="term" value="P:carbohydrate metabolic process"/>
    <property type="evidence" value="ECO:0007669"/>
    <property type="project" value="InterPro"/>
</dbReference>
<dbReference type="GO" id="GO:0042339">
    <property type="term" value="P:keratan sulfate proteoglycan metabolic process"/>
    <property type="evidence" value="ECO:0000318"/>
    <property type="project" value="GO_Central"/>
</dbReference>
<dbReference type="GO" id="GO:0006044">
    <property type="term" value="P:N-acetylglucosamine metabolic process"/>
    <property type="evidence" value="ECO:0000318"/>
    <property type="project" value="GO_Central"/>
</dbReference>
<dbReference type="Gene3D" id="3.40.50.300">
    <property type="entry name" value="P-loop containing nucleotide triphosphate hydrolases"/>
    <property type="match status" value="1"/>
</dbReference>
<dbReference type="InterPro" id="IPR016469">
    <property type="entry name" value="Carbohydrate_sulfotransferase"/>
</dbReference>
<dbReference type="InterPro" id="IPR051135">
    <property type="entry name" value="Gal/GlcNAc/GalNAc_ST"/>
</dbReference>
<dbReference type="InterPro" id="IPR027417">
    <property type="entry name" value="P-loop_NTPase"/>
</dbReference>
<dbReference type="InterPro" id="IPR000863">
    <property type="entry name" value="Sulfotransferase_dom"/>
</dbReference>
<dbReference type="PANTHER" id="PTHR10704">
    <property type="entry name" value="CARBOHYDRATE SULFOTRANSFERASE"/>
    <property type="match status" value="1"/>
</dbReference>
<dbReference type="PANTHER" id="PTHR10704:SF36">
    <property type="entry name" value="CARBOHYDRATE SULFOTRANSFERASE 1"/>
    <property type="match status" value="1"/>
</dbReference>
<dbReference type="Pfam" id="PF00685">
    <property type="entry name" value="Sulfotransfer_1"/>
    <property type="match status" value="1"/>
</dbReference>
<dbReference type="PIRSF" id="PIRSF005883">
    <property type="entry name" value="Carbohydrate_sulfotransferase"/>
    <property type="match status" value="1"/>
</dbReference>
<dbReference type="SUPFAM" id="SSF52540">
    <property type="entry name" value="P-loop containing nucleoside triphosphate hydrolases"/>
    <property type="match status" value="1"/>
</dbReference>
<feature type="chain" id="PRO_0000085185" description="Carbohydrate sulfotransferase 1">
    <location>
        <begin position="1"/>
        <end position="420"/>
    </location>
</feature>
<feature type="topological domain" description="Cytoplasmic" evidence="2">
    <location>
        <position position="1"/>
    </location>
</feature>
<feature type="transmembrane region" description="Helical; Signal-anchor for type II membrane protein" evidence="2">
    <location>
        <begin position="2"/>
        <end position="23"/>
    </location>
</feature>
<feature type="topological domain" description="Lumenal" evidence="2">
    <location>
        <begin position="24"/>
        <end position="420"/>
    </location>
</feature>
<feature type="binding site" evidence="1">
    <location>
        <begin position="77"/>
        <end position="83"/>
    </location>
    <ligand>
        <name>3'-phosphoadenylyl sulfate</name>
        <dbReference type="ChEBI" id="CHEBI:58339"/>
    </ligand>
</feature>
<feature type="binding site" evidence="1">
    <location>
        <begin position="242"/>
        <end position="250"/>
    </location>
    <ligand>
        <name>3'-phosphoadenylyl sulfate</name>
        <dbReference type="ChEBI" id="CHEBI:58339"/>
    </ligand>
</feature>
<feature type="glycosylation site" description="N-linked (GlcNAc...) asparagine" evidence="2">
    <location>
        <position position="64"/>
    </location>
</feature>
<feature type="glycosylation site" description="N-linked (GlcNAc...) asparagine" evidence="2">
    <location>
        <position position="153"/>
    </location>
</feature>
<feature type="glycosylation site" description="N-linked (GlcNAc...) asparagine" evidence="2">
    <location>
        <position position="197"/>
    </location>
</feature>
<feature type="glycosylation site" description="N-linked (GlcNAc...) asparagine" evidence="2">
    <location>
        <position position="342"/>
    </location>
</feature>
<feature type="glycosylation site" description="N-linked (GlcNAc...) asparagine" evidence="2">
    <location>
        <position position="405"/>
    </location>
</feature>
<feature type="sequence conflict" description="In Ref. 1; AAH78309." evidence="3" ref="1">
    <original>K</original>
    <variation>N</variation>
    <location>
        <position position="166"/>
    </location>
</feature>
<feature type="sequence conflict" description="In Ref. 1; AAH78309." evidence="3" ref="1">
    <original>S</original>
    <variation>T</variation>
    <location>
        <position position="195"/>
    </location>
</feature>
<feature type="sequence conflict" description="In Ref. 1; AAH78309." evidence="3" ref="1">
    <original>G</original>
    <variation>S</variation>
    <location>
        <position position="335"/>
    </location>
</feature>
<feature type="sequence conflict" description="In Ref. 1; AAH78309." evidence="3" ref="1">
    <original>L</original>
    <variation>S</variation>
    <location>
        <position position="371"/>
    </location>
</feature>
<evidence type="ECO:0000250" key="1"/>
<evidence type="ECO:0000255" key="2"/>
<evidence type="ECO:0000305" key="3"/>
<comment type="function">
    <text evidence="1">Sulfotransferase that utilizes 3'-phospho-5'-adenylyl sulfate (PAPS) as sulfonate donor to catalyze the transfer of sulfate to position 6 of galactose (Gal) residues of keratan.</text>
</comment>
<comment type="catalytic activity">
    <reaction>
        <text>3'-phosphoadenylyl sulfate + keratan = adenosine 3',5'-bisphosphate + keratan 6'-sulfate.</text>
        <dbReference type="EC" id="2.8.2.21"/>
    </reaction>
</comment>
<comment type="subcellular location">
    <subcellularLocation>
        <location evidence="1">Golgi apparatus membrane</location>
        <topology evidence="1">Single-pass type II membrane protein</topology>
    </subcellularLocation>
</comment>
<comment type="similarity">
    <text evidence="3">Belongs to the sulfotransferase 1 family. Gal/GlcNAc/GalNAc subfamily.</text>
</comment>